<feature type="chain" id="PRO_1000143292" description="Small ribosomal subunit protein uS17">
    <location>
        <begin position="1"/>
        <end position="85"/>
    </location>
</feature>
<gene>
    <name evidence="1" type="primary">rpsQ</name>
    <name type="ordered locus">RC1_0720</name>
</gene>
<proteinExistence type="inferred from homology"/>
<reference key="1">
    <citation type="submission" date="2007-03" db="EMBL/GenBank/DDBJ databases">
        <title>Genome sequence of Rhodospirillum centenum.</title>
        <authorList>
            <person name="Touchman J.W."/>
            <person name="Bauer C."/>
            <person name="Blankenship R.E."/>
        </authorList>
    </citation>
    <scope>NUCLEOTIDE SEQUENCE [LARGE SCALE GENOMIC DNA]</scope>
    <source>
        <strain>ATCC 51521 / SW</strain>
    </source>
</reference>
<organism>
    <name type="scientific">Rhodospirillum centenum (strain ATCC 51521 / SW)</name>
    <dbReference type="NCBI Taxonomy" id="414684"/>
    <lineage>
        <taxon>Bacteria</taxon>
        <taxon>Pseudomonadati</taxon>
        <taxon>Pseudomonadota</taxon>
        <taxon>Alphaproteobacteria</taxon>
        <taxon>Rhodospirillales</taxon>
        <taxon>Rhodospirillaceae</taxon>
        <taxon>Rhodospirillum</taxon>
    </lineage>
</organism>
<name>RS17_RHOCS</name>
<dbReference type="EMBL" id="CP000613">
    <property type="protein sequence ID" value="ACI98151.1"/>
    <property type="molecule type" value="Genomic_DNA"/>
</dbReference>
<dbReference type="RefSeq" id="WP_012565942.1">
    <property type="nucleotide sequence ID" value="NC_011420.2"/>
</dbReference>
<dbReference type="SMR" id="B6IRR5"/>
<dbReference type="STRING" id="414684.RC1_0720"/>
<dbReference type="KEGG" id="rce:RC1_0720"/>
<dbReference type="eggNOG" id="COG0186">
    <property type="taxonomic scope" value="Bacteria"/>
</dbReference>
<dbReference type="HOGENOM" id="CLU_073626_1_1_5"/>
<dbReference type="OrthoDB" id="9811714at2"/>
<dbReference type="Proteomes" id="UP000001591">
    <property type="component" value="Chromosome"/>
</dbReference>
<dbReference type="GO" id="GO:0022627">
    <property type="term" value="C:cytosolic small ribosomal subunit"/>
    <property type="evidence" value="ECO:0007669"/>
    <property type="project" value="TreeGrafter"/>
</dbReference>
<dbReference type="GO" id="GO:0019843">
    <property type="term" value="F:rRNA binding"/>
    <property type="evidence" value="ECO:0007669"/>
    <property type="project" value="UniProtKB-UniRule"/>
</dbReference>
<dbReference type="GO" id="GO:0003735">
    <property type="term" value="F:structural constituent of ribosome"/>
    <property type="evidence" value="ECO:0007669"/>
    <property type="project" value="InterPro"/>
</dbReference>
<dbReference type="GO" id="GO:0006412">
    <property type="term" value="P:translation"/>
    <property type="evidence" value="ECO:0007669"/>
    <property type="project" value="UniProtKB-UniRule"/>
</dbReference>
<dbReference type="CDD" id="cd00364">
    <property type="entry name" value="Ribosomal_uS17"/>
    <property type="match status" value="1"/>
</dbReference>
<dbReference type="Gene3D" id="2.40.50.140">
    <property type="entry name" value="Nucleic acid-binding proteins"/>
    <property type="match status" value="1"/>
</dbReference>
<dbReference type="HAMAP" id="MF_01345_B">
    <property type="entry name" value="Ribosomal_uS17_B"/>
    <property type="match status" value="1"/>
</dbReference>
<dbReference type="InterPro" id="IPR012340">
    <property type="entry name" value="NA-bd_OB-fold"/>
</dbReference>
<dbReference type="InterPro" id="IPR000266">
    <property type="entry name" value="Ribosomal_uS17"/>
</dbReference>
<dbReference type="InterPro" id="IPR019984">
    <property type="entry name" value="Ribosomal_uS17_bact/chlr"/>
</dbReference>
<dbReference type="InterPro" id="IPR019979">
    <property type="entry name" value="Ribosomal_uS17_CS"/>
</dbReference>
<dbReference type="NCBIfam" id="NF004123">
    <property type="entry name" value="PRK05610.1"/>
    <property type="match status" value="1"/>
</dbReference>
<dbReference type="NCBIfam" id="TIGR03635">
    <property type="entry name" value="uS17_bact"/>
    <property type="match status" value="1"/>
</dbReference>
<dbReference type="PANTHER" id="PTHR10744">
    <property type="entry name" value="40S RIBOSOMAL PROTEIN S11 FAMILY MEMBER"/>
    <property type="match status" value="1"/>
</dbReference>
<dbReference type="PANTHER" id="PTHR10744:SF1">
    <property type="entry name" value="SMALL RIBOSOMAL SUBUNIT PROTEIN US17M"/>
    <property type="match status" value="1"/>
</dbReference>
<dbReference type="Pfam" id="PF00366">
    <property type="entry name" value="Ribosomal_S17"/>
    <property type="match status" value="1"/>
</dbReference>
<dbReference type="PRINTS" id="PR00973">
    <property type="entry name" value="RIBOSOMALS17"/>
</dbReference>
<dbReference type="SUPFAM" id="SSF50249">
    <property type="entry name" value="Nucleic acid-binding proteins"/>
    <property type="match status" value="1"/>
</dbReference>
<dbReference type="PROSITE" id="PS00056">
    <property type="entry name" value="RIBOSOMAL_S17"/>
    <property type="match status" value="1"/>
</dbReference>
<keyword id="KW-1185">Reference proteome</keyword>
<keyword id="KW-0687">Ribonucleoprotein</keyword>
<keyword id="KW-0689">Ribosomal protein</keyword>
<keyword id="KW-0694">RNA-binding</keyword>
<keyword id="KW-0699">rRNA-binding</keyword>
<protein>
    <recommendedName>
        <fullName evidence="1">Small ribosomal subunit protein uS17</fullName>
    </recommendedName>
    <alternativeName>
        <fullName evidence="2">30S ribosomal protein S17</fullName>
    </alternativeName>
</protein>
<comment type="function">
    <text evidence="1">One of the primary rRNA binding proteins, it binds specifically to the 5'-end of 16S ribosomal RNA.</text>
</comment>
<comment type="subunit">
    <text evidence="1">Part of the 30S ribosomal subunit.</text>
</comment>
<comment type="similarity">
    <text evidence="1">Belongs to the universal ribosomal protein uS17 family.</text>
</comment>
<accession>B6IRR5</accession>
<sequence length="85" mass="9480">MPRRILQGTVVSDKGDKTVIVLVERRVMHPVYKKFIKQSKKYAAHDEANAFKIGDVVQIEECRPISKRKRWTVVTGAAAEAGAAS</sequence>
<evidence type="ECO:0000255" key="1">
    <source>
        <dbReference type="HAMAP-Rule" id="MF_01345"/>
    </source>
</evidence>
<evidence type="ECO:0000305" key="2"/>